<comment type="function">
    <text evidence="1">Produces ATP from ADP in the presence of a proton gradient across the membrane. The catalytic sites are hosted primarily by the beta subunits.</text>
</comment>
<comment type="catalytic activity">
    <reaction evidence="1">
        <text>ATP + H2O + 4 H(+)(in) = ADP + phosphate + 5 H(+)(out)</text>
        <dbReference type="Rhea" id="RHEA:57720"/>
        <dbReference type="ChEBI" id="CHEBI:15377"/>
        <dbReference type="ChEBI" id="CHEBI:15378"/>
        <dbReference type="ChEBI" id="CHEBI:30616"/>
        <dbReference type="ChEBI" id="CHEBI:43474"/>
        <dbReference type="ChEBI" id="CHEBI:456216"/>
        <dbReference type="EC" id="7.1.2.2"/>
    </reaction>
</comment>
<comment type="subunit">
    <text evidence="1">F-type ATPases have 2 components, CF(1) - the catalytic core - and CF(0) - the membrane proton channel. CF(1) has five subunits: alpha(3), beta(3), gamma(1), delta(1), epsilon(1). CF(0) has three main subunits: a(1), b(2) and c(9-12). The alpha and beta chains form an alternating ring which encloses part of the gamma chain. CF(1) is attached to CF(0) by a central stalk formed by the gamma and epsilon chains, while a peripheral stalk is formed by the delta and b chains.</text>
</comment>
<comment type="subcellular location">
    <subcellularLocation>
        <location evidence="1">Cell membrane</location>
        <topology evidence="1">Peripheral membrane protein</topology>
    </subcellularLocation>
</comment>
<comment type="similarity">
    <text evidence="1">Belongs to the ATPase alpha/beta chains family.</text>
</comment>
<keyword id="KW-0066">ATP synthesis</keyword>
<keyword id="KW-0067">ATP-binding</keyword>
<keyword id="KW-1003">Cell membrane</keyword>
<keyword id="KW-0139">CF(1)</keyword>
<keyword id="KW-0375">Hydrogen ion transport</keyword>
<keyword id="KW-0406">Ion transport</keyword>
<keyword id="KW-0472">Membrane</keyword>
<keyword id="KW-0547">Nucleotide-binding</keyword>
<keyword id="KW-1185">Reference proteome</keyword>
<keyword id="KW-1278">Translocase</keyword>
<keyword id="KW-0813">Transport</keyword>
<gene>
    <name evidence="1" type="primary">atpD</name>
    <name type="ordered locus">Daud_2137</name>
</gene>
<feature type="chain" id="PRO_1000143495" description="ATP synthase subunit beta">
    <location>
        <begin position="1"/>
        <end position="472"/>
    </location>
</feature>
<feature type="binding site" evidence="1">
    <location>
        <begin position="157"/>
        <end position="164"/>
    </location>
    <ligand>
        <name>ATP</name>
        <dbReference type="ChEBI" id="CHEBI:30616"/>
    </ligand>
</feature>
<sequence>MNVGEVVQIIGVVVDVRFPPGQVPEIYNALTIETDKVDAFGRKFNLTLEVAQHLGNNVVRTVAMSTTDGLVRGAKVVDTGAPIKVPVGRPVLGRLIDVLGMPIDGLGDIKAETYYPIHRPAPALVDQSTKVEQLETGLKVIDLLVPFMKGGKIGMFGGAGVGKTVIVMELINNIAKQHGGISVFAGVGERTREGNELLLEMTEAGVLDKTMMVFGQMNEPPGCRLRVGLTGLCLAEYFRDEEGADVLIFIDNIFRFAQAGTEVSALLGRMPSAVGYQPTLATEMGQLQERITSTTKGSITSVQAVYVPADDLTDPAPANTFAHLDGTVVLSRQIAELGIYPAVDPLDSVSRILDPNVVGQEHYQVARGVQKVLQRYKELQDIIAILGMEELSEEDKLIVARARKLQRYLSQPFHVAEAFTGTPGRYVSLKDNIRGFQEILDGKHDGLPEDAFYMVGTIEEAVEKGKKILEAS</sequence>
<dbReference type="EC" id="7.1.2.2" evidence="1"/>
<dbReference type="EMBL" id="CP000860">
    <property type="protein sequence ID" value="ACA60624.1"/>
    <property type="molecule type" value="Genomic_DNA"/>
</dbReference>
<dbReference type="RefSeq" id="WP_012303199.1">
    <property type="nucleotide sequence ID" value="NC_010424.1"/>
</dbReference>
<dbReference type="SMR" id="B1I6J7"/>
<dbReference type="STRING" id="477974.Daud_2137"/>
<dbReference type="KEGG" id="dau:Daud_2137"/>
<dbReference type="eggNOG" id="COG0055">
    <property type="taxonomic scope" value="Bacteria"/>
</dbReference>
<dbReference type="HOGENOM" id="CLU_022398_0_2_9"/>
<dbReference type="OrthoDB" id="9803053at2"/>
<dbReference type="Proteomes" id="UP000008544">
    <property type="component" value="Chromosome"/>
</dbReference>
<dbReference type="GO" id="GO:0005886">
    <property type="term" value="C:plasma membrane"/>
    <property type="evidence" value="ECO:0007669"/>
    <property type="project" value="UniProtKB-SubCell"/>
</dbReference>
<dbReference type="GO" id="GO:0045259">
    <property type="term" value="C:proton-transporting ATP synthase complex"/>
    <property type="evidence" value="ECO:0007669"/>
    <property type="project" value="UniProtKB-KW"/>
</dbReference>
<dbReference type="GO" id="GO:0005524">
    <property type="term" value="F:ATP binding"/>
    <property type="evidence" value="ECO:0007669"/>
    <property type="project" value="UniProtKB-UniRule"/>
</dbReference>
<dbReference type="GO" id="GO:0016887">
    <property type="term" value="F:ATP hydrolysis activity"/>
    <property type="evidence" value="ECO:0007669"/>
    <property type="project" value="InterPro"/>
</dbReference>
<dbReference type="GO" id="GO:0046933">
    <property type="term" value="F:proton-transporting ATP synthase activity, rotational mechanism"/>
    <property type="evidence" value="ECO:0007669"/>
    <property type="project" value="UniProtKB-UniRule"/>
</dbReference>
<dbReference type="CDD" id="cd18110">
    <property type="entry name" value="ATP-synt_F1_beta_C"/>
    <property type="match status" value="1"/>
</dbReference>
<dbReference type="CDD" id="cd18115">
    <property type="entry name" value="ATP-synt_F1_beta_N"/>
    <property type="match status" value="1"/>
</dbReference>
<dbReference type="CDD" id="cd01133">
    <property type="entry name" value="F1-ATPase_beta_CD"/>
    <property type="match status" value="1"/>
</dbReference>
<dbReference type="FunFam" id="1.10.1140.10:FF:000001">
    <property type="entry name" value="ATP synthase subunit beta"/>
    <property type="match status" value="1"/>
</dbReference>
<dbReference type="FunFam" id="2.40.10.170:FF:000005">
    <property type="entry name" value="ATP synthase subunit beta"/>
    <property type="match status" value="1"/>
</dbReference>
<dbReference type="FunFam" id="3.40.50.300:FF:000004">
    <property type="entry name" value="ATP synthase subunit beta"/>
    <property type="match status" value="1"/>
</dbReference>
<dbReference type="Gene3D" id="2.40.10.170">
    <property type="match status" value="1"/>
</dbReference>
<dbReference type="Gene3D" id="1.10.1140.10">
    <property type="entry name" value="Bovine Mitochondrial F1-atpase, Atp Synthase Beta Chain, Chain D, domain 3"/>
    <property type="match status" value="1"/>
</dbReference>
<dbReference type="Gene3D" id="3.40.50.300">
    <property type="entry name" value="P-loop containing nucleotide triphosphate hydrolases"/>
    <property type="match status" value="1"/>
</dbReference>
<dbReference type="HAMAP" id="MF_01347">
    <property type="entry name" value="ATP_synth_beta_bact"/>
    <property type="match status" value="1"/>
</dbReference>
<dbReference type="InterPro" id="IPR003593">
    <property type="entry name" value="AAA+_ATPase"/>
</dbReference>
<dbReference type="InterPro" id="IPR055190">
    <property type="entry name" value="ATP-synt_VA_C"/>
</dbReference>
<dbReference type="InterPro" id="IPR005722">
    <property type="entry name" value="ATP_synth_F1_bsu"/>
</dbReference>
<dbReference type="InterPro" id="IPR020003">
    <property type="entry name" value="ATPase_a/bsu_AS"/>
</dbReference>
<dbReference type="InterPro" id="IPR050053">
    <property type="entry name" value="ATPase_alpha/beta_chains"/>
</dbReference>
<dbReference type="InterPro" id="IPR004100">
    <property type="entry name" value="ATPase_F1/V1/A1_a/bsu_N"/>
</dbReference>
<dbReference type="InterPro" id="IPR036121">
    <property type="entry name" value="ATPase_F1/V1/A1_a/bsu_N_sf"/>
</dbReference>
<dbReference type="InterPro" id="IPR000194">
    <property type="entry name" value="ATPase_F1/V1/A1_a/bsu_nucl-bd"/>
</dbReference>
<dbReference type="InterPro" id="IPR024034">
    <property type="entry name" value="ATPase_F1/V1_b/a_C"/>
</dbReference>
<dbReference type="InterPro" id="IPR027417">
    <property type="entry name" value="P-loop_NTPase"/>
</dbReference>
<dbReference type="NCBIfam" id="TIGR01039">
    <property type="entry name" value="atpD"/>
    <property type="match status" value="1"/>
</dbReference>
<dbReference type="PANTHER" id="PTHR15184">
    <property type="entry name" value="ATP SYNTHASE"/>
    <property type="match status" value="1"/>
</dbReference>
<dbReference type="PANTHER" id="PTHR15184:SF71">
    <property type="entry name" value="ATP SYNTHASE SUBUNIT BETA, MITOCHONDRIAL"/>
    <property type="match status" value="1"/>
</dbReference>
<dbReference type="Pfam" id="PF00006">
    <property type="entry name" value="ATP-synt_ab"/>
    <property type="match status" value="1"/>
</dbReference>
<dbReference type="Pfam" id="PF02874">
    <property type="entry name" value="ATP-synt_ab_N"/>
    <property type="match status" value="1"/>
</dbReference>
<dbReference type="Pfam" id="PF22919">
    <property type="entry name" value="ATP-synt_VA_C"/>
    <property type="match status" value="1"/>
</dbReference>
<dbReference type="SMART" id="SM00382">
    <property type="entry name" value="AAA"/>
    <property type="match status" value="1"/>
</dbReference>
<dbReference type="SUPFAM" id="SSF47917">
    <property type="entry name" value="C-terminal domain of alpha and beta subunits of F1 ATP synthase"/>
    <property type="match status" value="1"/>
</dbReference>
<dbReference type="SUPFAM" id="SSF50615">
    <property type="entry name" value="N-terminal domain of alpha and beta subunits of F1 ATP synthase"/>
    <property type="match status" value="1"/>
</dbReference>
<dbReference type="SUPFAM" id="SSF52540">
    <property type="entry name" value="P-loop containing nucleoside triphosphate hydrolases"/>
    <property type="match status" value="1"/>
</dbReference>
<dbReference type="PROSITE" id="PS00152">
    <property type="entry name" value="ATPASE_ALPHA_BETA"/>
    <property type="match status" value="1"/>
</dbReference>
<protein>
    <recommendedName>
        <fullName evidence="1">ATP synthase subunit beta</fullName>
        <ecNumber evidence="1">7.1.2.2</ecNumber>
    </recommendedName>
    <alternativeName>
        <fullName evidence="1">ATP synthase F1 sector subunit beta</fullName>
    </alternativeName>
    <alternativeName>
        <fullName evidence="1">F-ATPase subunit beta</fullName>
    </alternativeName>
</protein>
<reference key="1">
    <citation type="submission" date="2007-10" db="EMBL/GenBank/DDBJ databases">
        <title>Complete sequence of chromosome of Desulforudis audaxviator MP104C.</title>
        <authorList>
            <person name="Copeland A."/>
            <person name="Lucas S."/>
            <person name="Lapidus A."/>
            <person name="Barry K."/>
            <person name="Glavina del Rio T."/>
            <person name="Dalin E."/>
            <person name="Tice H."/>
            <person name="Bruce D."/>
            <person name="Pitluck S."/>
            <person name="Lowry S.R."/>
            <person name="Larimer F."/>
            <person name="Land M.L."/>
            <person name="Hauser L."/>
            <person name="Kyrpides N."/>
            <person name="Ivanova N.N."/>
            <person name="Richardson P."/>
        </authorList>
    </citation>
    <scope>NUCLEOTIDE SEQUENCE [LARGE SCALE GENOMIC DNA]</scope>
    <source>
        <strain>MP104C</strain>
    </source>
</reference>
<organism>
    <name type="scientific">Desulforudis audaxviator (strain MP104C)</name>
    <dbReference type="NCBI Taxonomy" id="477974"/>
    <lineage>
        <taxon>Bacteria</taxon>
        <taxon>Bacillati</taxon>
        <taxon>Bacillota</taxon>
        <taxon>Clostridia</taxon>
        <taxon>Thermoanaerobacterales</taxon>
        <taxon>Candidatus Desulforudaceae</taxon>
        <taxon>Candidatus Desulforudis</taxon>
    </lineage>
</organism>
<evidence type="ECO:0000255" key="1">
    <source>
        <dbReference type="HAMAP-Rule" id="MF_01347"/>
    </source>
</evidence>
<proteinExistence type="inferred from homology"/>
<accession>B1I6J7</accession>
<name>ATPB_DESAP</name>